<reference key="1">
    <citation type="submission" date="2005-03" db="EMBL/GenBank/DDBJ databases">
        <title>Brevibacillus brevis strain 47, complete genome.</title>
        <authorList>
            <person name="Hosoyama A."/>
            <person name="Yamada R."/>
            <person name="Hongo Y."/>
            <person name="Terui Y."/>
            <person name="Ankai A."/>
            <person name="Masuyama W."/>
            <person name="Sekiguchi M."/>
            <person name="Takeda T."/>
            <person name="Asano K."/>
            <person name="Ohji S."/>
            <person name="Ichikawa N."/>
            <person name="Narita S."/>
            <person name="Aoki N."/>
            <person name="Miura H."/>
            <person name="Matsushita S."/>
            <person name="Sekigawa T."/>
            <person name="Yamagata H."/>
            <person name="Yoshikawa H."/>
            <person name="Udaka S."/>
            <person name="Tanikawa S."/>
            <person name="Fujita N."/>
        </authorList>
    </citation>
    <scope>NUCLEOTIDE SEQUENCE [LARGE SCALE GENOMIC DNA]</scope>
    <source>
        <strain>47 / JCM 6285 / NBRC 100599</strain>
    </source>
</reference>
<protein>
    <recommendedName>
        <fullName evidence="1">Pyrrolidone-carboxylate peptidase</fullName>
        <ecNumber evidence="1">3.4.19.3</ecNumber>
    </recommendedName>
    <alternativeName>
        <fullName evidence="1">5-oxoprolyl-peptidase</fullName>
    </alternativeName>
    <alternativeName>
        <fullName evidence="1">Pyroglutamyl-peptidase I</fullName>
        <shortName evidence="1">PGP-I</shortName>
        <shortName evidence="1">Pyrase</shortName>
    </alternativeName>
</protein>
<feature type="chain" id="PRO_1000192222" description="Pyrrolidone-carboxylate peptidase">
    <location>
        <begin position="1"/>
        <end position="215"/>
    </location>
</feature>
<feature type="active site" evidence="1">
    <location>
        <position position="80"/>
    </location>
</feature>
<feature type="active site" evidence="1">
    <location>
        <position position="143"/>
    </location>
</feature>
<feature type="active site" evidence="1">
    <location>
        <position position="167"/>
    </location>
</feature>
<dbReference type="EC" id="3.4.19.3" evidence="1"/>
<dbReference type="EMBL" id="AP008955">
    <property type="protein sequence ID" value="BAH43629.1"/>
    <property type="molecule type" value="Genomic_DNA"/>
</dbReference>
<dbReference type="RefSeq" id="WP_015890949.1">
    <property type="nucleotide sequence ID" value="NC_012491.1"/>
</dbReference>
<dbReference type="SMR" id="C0ZCX0"/>
<dbReference type="STRING" id="358681.BBR47_26520"/>
<dbReference type="MEROPS" id="C15.001"/>
<dbReference type="KEGG" id="bbe:BBR47_26520"/>
<dbReference type="eggNOG" id="COG2039">
    <property type="taxonomic scope" value="Bacteria"/>
</dbReference>
<dbReference type="HOGENOM" id="CLU_043960_4_0_9"/>
<dbReference type="Proteomes" id="UP000001877">
    <property type="component" value="Chromosome"/>
</dbReference>
<dbReference type="GO" id="GO:0005829">
    <property type="term" value="C:cytosol"/>
    <property type="evidence" value="ECO:0007669"/>
    <property type="project" value="InterPro"/>
</dbReference>
<dbReference type="GO" id="GO:0016920">
    <property type="term" value="F:pyroglutamyl-peptidase activity"/>
    <property type="evidence" value="ECO:0007669"/>
    <property type="project" value="UniProtKB-UniRule"/>
</dbReference>
<dbReference type="GO" id="GO:0006508">
    <property type="term" value="P:proteolysis"/>
    <property type="evidence" value="ECO:0007669"/>
    <property type="project" value="UniProtKB-KW"/>
</dbReference>
<dbReference type="CDD" id="cd00501">
    <property type="entry name" value="Peptidase_C15"/>
    <property type="match status" value="1"/>
</dbReference>
<dbReference type="FunFam" id="3.40.630.20:FF:000001">
    <property type="entry name" value="Pyrrolidone-carboxylate peptidase"/>
    <property type="match status" value="1"/>
</dbReference>
<dbReference type="Gene3D" id="3.40.630.20">
    <property type="entry name" value="Peptidase C15, pyroglutamyl peptidase I-like"/>
    <property type="match status" value="1"/>
</dbReference>
<dbReference type="HAMAP" id="MF_00417">
    <property type="entry name" value="Pyrrolid_peptidase"/>
    <property type="match status" value="1"/>
</dbReference>
<dbReference type="InterPro" id="IPR000816">
    <property type="entry name" value="Peptidase_C15"/>
</dbReference>
<dbReference type="InterPro" id="IPR016125">
    <property type="entry name" value="Peptidase_C15-like"/>
</dbReference>
<dbReference type="InterPro" id="IPR036440">
    <property type="entry name" value="Peptidase_C15-like_sf"/>
</dbReference>
<dbReference type="InterPro" id="IPR029762">
    <property type="entry name" value="PGP-I_bact-type"/>
</dbReference>
<dbReference type="InterPro" id="IPR033694">
    <property type="entry name" value="PGPEP1_Cys_AS"/>
</dbReference>
<dbReference type="NCBIfam" id="NF009676">
    <property type="entry name" value="PRK13197.1"/>
    <property type="match status" value="1"/>
</dbReference>
<dbReference type="NCBIfam" id="TIGR00504">
    <property type="entry name" value="pyro_pdase"/>
    <property type="match status" value="1"/>
</dbReference>
<dbReference type="PANTHER" id="PTHR23402">
    <property type="entry name" value="PROTEASE FAMILY C15 PYROGLUTAMYL-PEPTIDASE I-RELATED"/>
    <property type="match status" value="1"/>
</dbReference>
<dbReference type="PANTHER" id="PTHR23402:SF1">
    <property type="entry name" value="PYROGLUTAMYL-PEPTIDASE I"/>
    <property type="match status" value="1"/>
</dbReference>
<dbReference type="Pfam" id="PF01470">
    <property type="entry name" value="Peptidase_C15"/>
    <property type="match status" value="1"/>
</dbReference>
<dbReference type="PIRSF" id="PIRSF015592">
    <property type="entry name" value="Prld-crbxl_pptds"/>
    <property type="match status" value="1"/>
</dbReference>
<dbReference type="PRINTS" id="PR00706">
    <property type="entry name" value="PYROGLUPTASE"/>
</dbReference>
<dbReference type="SUPFAM" id="SSF53182">
    <property type="entry name" value="Pyrrolidone carboxyl peptidase (pyroglutamate aminopeptidase)"/>
    <property type="match status" value="1"/>
</dbReference>
<dbReference type="PROSITE" id="PS01334">
    <property type="entry name" value="PYRASE_CYS"/>
    <property type="match status" value="1"/>
</dbReference>
<gene>
    <name evidence="1" type="primary">pcp</name>
    <name type="ordered locus">BBR47_26520</name>
</gene>
<name>PCP_BREBN</name>
<comment type="function">
    <text evidence="1">Removes 5-oxoproline from various penultimate amino acid residues except L-proline.</text>
</comment>
<comment type="catalytic activity">
    <reaction evidence="1">
        <text>Release of an N-terminal pyroglutamyl group from a polypeptide, the second amino acid generally not being Pro.</text>
        <dbReference type="EC" id="3.4.19.3"/>
    </reaction>
</comment>
<comment type="subunit">
    <text evidence="1">Homotetramer.</text>
</comment>
<comment type="subcellular location">
    <subcellularLocation>
        <location evidence="1">Cytoplasm</location>
    </subcellularLocation>
</comment>
<comment type="similarity">
    <text evidence="1">Belongs to the peptidase C15 family.</text>
</comment>
<accession>C0ZCX0</accession>
<keyword id="KW-0963">Cytoplasm</keyword>
<keyword id="KW-0378">Hydrolase</keyword>
<keyword id="KW-0645">Protease</keyword>
<keyword id="KW-1185">Reference proteome</keyword>
<keyword id="KW-0788">Thiol protease</keyword>
<proteinExistence type="inferred from homology"/>
<sequence>MKTILVTGFDPFGGEIVNPAWESVKELGKIESDLYKVELRQIPTVFEKSIEHLYAAIEETKPDIVLCIGQAGGRGDIAVERVAINVNDARIPDNEGNQPIDTPIRENGPTGYWSTLPIKAIVHELKQKGIPASISQTAGTYVCNHLFYGLMHYLAEKKASVRGGFIHIPYLPEQAARQADQPSMALETIVKGLQLAIETTISHDRDIVMEGGQIS</sequence>
<organism>
    <name type="scientific">Brevibacillus brevis (strain 47 / JCM 6285 / NBRC 100599)</name>
    <dbReference type="NCBI Taxonomy" id="358681"/>
    <lineage>
        <taxon>Bacteria</taxon>
        <taxon>Bacillati</taxon>
        <taxon>Bacillota</taxon>
        <taxon>Bacilli</taxon>
        <taxon>Bacillales</taxon>
        <taxon>Paenibacillaceae</taxon>
        <taxon>Brevibacillus</taxon>
    </lineage>
</organism>
<evidence type="ECO:0000255" key="1">
    <source>
        <dbReference type="HAMAP-Rule" id="MF_00417"/>
    </source>
</evidence>